<organism>
    <name type="scientific">Thermodesulfovibrio yellowstonii (strain ATCC 51303 / DSM 11347 / YP87)</name>
    <dbReference type="NCBI Taxonomy" id="289376"/>
    <lineage>
        <taxon>Bacteria</taxon>
        <taxon>Pseudomonadati</taxon>
        <taxon>Nitrospirota</taxon>
        <taxon>Thermodesulfovibrionia</taxon>
        <taxon>Thermodesulfovibrionales</taxon>
        <taxon>Thermodesulfovibrionaceae</taxon>
        <taxon>Thermodesulfovibrio</taxon>
    </lineage>
</organism>
<protein>
    <recommendedName>
        <fullName evidence="1">Large ribosomal subunit protein uL15</fullName>
    </recommendedName>
    <alternativeName>
        <fullName evidence="3">50S ribosomal protein L15</fullName>
    </alternativeName>
</protein>
<name>RL15_THEYD</name>
<proteinExistence type="inferred from homology"/>
<reference key="1">
    <citation type="submission" date="2008-08" db="EMBL/GenBank/DDBJ databases">
        <title>The complete genome sequence of Thermodesulfovibrio yellowstonii strain ATCC 51303 / DSM 11347 / YP87.</title>
        <authorList>
            <person name="Dodson R.J."/>
            <person name="Durkin A.S."/>
            <person name="Wu M."/>
            <person name="Eisen J."/>
            <person name="Sutton G."/>
        </authorList>
    </citation>
    <scope>NUCLEOTIDE SEQUENCE [LARGE SCALE GENOMIC DNA]</scope>
    <source>
        <strain>ATCC 51303 / DSM 11347 / YP87</strain>
    </source>
</reference>
<keyword id="KW-1185">Reference proteome</keyword>
<keyword id="KW-0687">Ribonucleoprotein</keyword>
<keyword id="KW-0689">Ribosomal protein</keyword>
<keyword id="KW-0694">RNA-binding</keyword>
<keyword id="KW-0699">rRNA-binding</keyword>
<accession>B5YG29</accession>
<comment type="function">
    <text evidence="1">Binds to the 23S rRNA.</text>
</comment>
<comment type="subunit">
    <text evidence="1">Part of the 50S ribosomal subunit.</text>
</comment>
<comment type="similarity">
    <text evidence="1">Belongs to the universal ribosomal protein uL15 family.</text>
</comment>
<dbReference type="EMBL" id="CP001147">
    <property type="protein sequence ID" value="ACI21816.1"/>
    <property type="molecule type" value="Genomic_DNA"/>
</dbReference>
<dbReference type="RefSeq" id="WP_012546521.1">
    <property type="nucleotide sequence ID" value="NC_011296.1"/>
</dbReference>
<dbReference type="RefSeq" id="YP_002249227.1">
    <property type="nucleotide sequence ID" value="NC_011296.1"/>
</dbReference>
<dbReference type="SMR" id="B5YG29"/>
<dbReference type="FunCoup" id="B5YG29">
    <property type="interactions" value="510"/>
</dbReference>
<dbReference type="STRING" id="289376.THEYE_A1428"/>
<dbReference type="EnsemblBacteria" id="ACI21816">
    <property type="protein sequence ID" value="ACI21816"/>
    <property type="gene ID" value="THEYE_A1428"/>
</dbReference>
<dbReference type="KEGG" id="tye:THEYE_A1428"/>
<dbReference type="PATRIC" id="fig|289376.4.peg.1389"/>
<dbReference type="eggNOG" id="COG0200">
    <property type="taxonomic scope" value="Bacteria"/>
</dbReference>
<dbReference type="HOGENOM" id="CLU_055188_4_2_0"/>
<dbReference type="InParanoid" id="B5YG29"/>
<dbReference type="OrthoDB" id="9810293at2"/>
<dbReference type="Proteomes" id="UP000000718">
    <property type="component" value="Chromosome"/>
</dbReference>
<dbReference type="GO" id="GO:0022625">
    <property type="term" value="C:cytosolic large ribosomal subunit"/>
    <property type="evidence" value="ECO:0000318"/>
    <property type="project" value="GO_Central"/>
</dbReference>
<dbReference type="GO" id="GO:0019843">
    <property type="term" value="F:rRNA binding"/>
    <property type="evidence" value="ECO:0007669"/>
    <property type="project" value="UniProtKB-UniRule"/>
</dbReference>
<dbReference type="GO" id="GO:0003735">
    <property type="term" value="F:structural constituent of ribosome"/>
    <property type="evidence" value="ECO:0000318"/>
    <property type="project" value="GO_Central"/>
</dbReference>
<dbReference type="GO" id="GO:0006412">
    <property type="term" value="P:translation"/>
    <property type="evidence" value="ECO:0007669"/>
    <property type="project" value="UniProtKB-UniRule"/>
</dbReference>
<dbReference type="Gene3D" id="3.100.10.10">
    <property type="match status" value="1"/>
</dbReference>
<dbReference type="HAMAP" id="MF_01341">
    <property type="entry name" value="Ribosomal_uL15"/>
    <property type="match status" value="1"/>
</dbReference>
<dbReference type="InterPro" id="IPR030878">
    <property type="entry name" value="Ribosomal_uL15"/>
</dbReference>
<dbReference type="InterPro" id="IPR021131">
    <property type="entry name" value="Ribosomal_uL15/eL18"/>
</dbReference>
<dbReference type="InterPro" id="IPR036227">
    <property type="entry name" value="Ribosomal_uL15/eL18_sf"/>
</dbReference>
<dbReference type="InterPro" id="IPR005749">
    <property type="entry name" value="Ribosomal_uL15_bac-type"/>
</dbReference>
<dbReference type="InterPro" id="IPR001196">
    <property type="entry name" value="Ribosomal_uL15_CS"/>
</dbReference>
<dbReference type="NCBIfam" id="TIGR01071">
    <property type="entry name" value="rplO_bact"/>
    <property type="match status" value="1"/>
</dbReference>
<dbReference type="PANTHER" id="PTHR12934">
    <property type="entry name" value="50S RIBOSOMAL PROTEIN L15"/>
    <property type="match status" value="1"/>
</dbReference>
<dbReference type="PANTHER" id="PTHR12934:SF11">
    <property type="entry name" value="LARGE RIBOSOMAL SUBUNIT PROTEIN UL15M"/>
    <property type="match status" value="1"/>
</dbReference>
<dbReference type="Pfam" id="PF00828">
    <property type="entry name" value="Ribosomal_L27A"/>
    <property type="match status" value="1"/>
</dbReference>
<dbReference type="SUPFAM" id="SSF52080">
    <property type="entry name" value="Ribosomal proteins L15p and L18e"/>
    <property type="match status" value="1"/>
</dbReference>
<dbReference type="PROSITE" id="PS00475">
    <property type="entry name" value="RIBOSOMAL_L15"/>
    <property type="match status" value="1"/>
</dbReference>
<sequence>MKINDLKPAPGSKKKAKRIGRGLGSGHGRYATKGLKGQKSRSGGAKGAGFEGGQMPLQRRVPKRGFSNAPFKKEYAIVNLEDLNKIIDEVDIITPETLLQKGIVKDLKDGLKILGNGEIKKSITVKTNAISKSALQKIQSVGGKVEVI</sequence>
<evidence type="ECO:0000255" key="1">
    <source>
        <dbReference type="HAMAP-Rule" id="MF_01341"/>
    </source>
</evidence>
<evidence type="ECO:0000256" key="2">
    <source>
        <dbReference type="SAM" id="MobiDB-lite"/>
    </source>
</evidence>
<evidence type="ECO:0000305" key="3"/>
<gene>
    <name evidence="1" type="primary">rplO</name>
    <name type="ordered locus">THEYE_A1428</name>
</gene>
<feature type="chain" id="PRO_1000142896" description="Large ribosomal subunit protein uL15">
    <location>
        <begin position="1"/>
        <end position="148"/>
    </location>
</feature>
<feature type="region of interest" description="Disordered" evidence="2">
    <location>
        <begin position="1"/>
        <end position="61"/>
    </location>
</feature>